<comment type="function">
    <text evidence="1 5">Scaffold protein that participates in the c-ring assembly of mitochondrial ATP synthase (F(1)F(0) ATP synthase or complex V) (By similarity). Also binds the mitochondrial proton-transporting ATP synthase complex I and may play a role in the stability of its membrane-bound subassemblies (Probable).</text>
</comment>
<comment type="subunit">
    <text evidence="3">Associates with mitochondrial complex I assembly intermediates during its biogenesis.</text>
</comment>
<comment type="subcellular location">
    <subcellularLocation>
        <location evidence="4">Mitochondrion membrane</location>
        <topology evidence="4">Multi-pass membrane protein</topology>
    </subcellularLocation>
</comment>
<comment type="similarity">
    <text evidence="4">Belongs to the TMEM70 family.</text>
</comment>
<accession>Q95SS8</accession>
<accession>Q9VS96</accession>
<proteinExistence type="evidence at protein level"/>
<organism evidence="7">
    <name type="scientific">Drosophila melanogaster</name>
    <name type="common">Fruit fly</name>
    <dbReference type="NCBI Taxonomy" id="7227"/>
    <lineage>
        <taxon>Eukaryota</taxon>
        <taxon>Metazoa</taxon>
        <taxon>Ecdysozoa</taxon>
        <taxon>Arthropoda</taxon>
        <taxon>Hexapoda</taxon>
        <taxon>Insecta</taxon>
        <taxon>Pterygota</taxon>
        <taxon>Neoptera</taxon>
        <taxon>Endopterygota</taxon>
        <taxon>Diptera</taxon>
        <taxon>Brachycera</taxon>
        <taxon>Muscomorpha</taxon>
        <taxon>Ephydroidea</taxon>
        <taxon>Drosophilidae</taxon>
        <taxon>Drosophila</taxon>
        <taxon>Sophophora</taxon>
    </lineage>
</organism>
<feature type="transit peptide" description="Mitochondrion" evidence="2">
    <location>
        <begin position="1"/>
        <end position="64"/>
    </location>
</feature>
<feature type="chain" id="PRO_0000361548" description="Transmembrane protein 70 homolog, mitochondrial">
    <location>
        <begin position="65"/>
        <end position="236"/>
    </location>
</feature>
<feature type="transmembrane region" description="Helical" evidence="2">
    <location>
        <begin position="83"/>
        <end position="103"/>
    </location>
</feature>
<feature type="transmembrane region" description="Helical" evidence="2">
    <location>
        <begin position="116"/>
        <end position="136"/>
    </location>
</feature>
<protein>
    <recommendedName>
        <fullName evidence="4">Transmembrane protein 70 homolog, mitochondrial</fullName>
    </recommendedName>
</protein>
<keyword id="KW-0472">Membrane</keyword>
<keyword id="KW-0496">Mitochondrion</keyword>
<keyword id="KW-1185">Reference proteome</keyword>
<keyword id="KW-0809">Transit peptide</keyword>
<keyword id="KW-0812">Transmembrane</keyword>
<keyword id="KW-1133">Transmembrane helix</keyword>
<reference key="1">
    <citation type="journal article" date="2000" name="Science">
        <title>The genome sequence of Drosophila melanogaster.</title>
        <authorList>
            <person name="Adams M.D."/>
            <person name="Celniker S.E."/>
            <person name="Holt R.A."/>
            <person name="Evans C.A."/>
            <person name="Gocayne J.D."/>
            <person name="Amanatides P.G."/>
            <person name="Scherer S.E."/>
            <person name="Li P.W."/>
            <person name="Hoskins R.A."/>
            <person name="Galle R.F."/>
            <person name="George R.A."/>
            <person name="Lewis S.E."/>
            <person name="Richards S."/>
            <person name="Ashburner M."/>
            <person name="Henderson S.N."/>
            <person name="Sutton G.G."/>
            <person name="Wortman J.R."/>
            <person name="Yandell M.D."/>
            <person name="Zhang Q."/>
            <person name="Chen L.X."/>
            <person name="Brandon R.C."/>
            <person name="Rogers Y.-H.C."/>
            <person name="Blazej R.G."/>
            <person name="Champe M."/>
            <person name="Pfeiffer B.D."/>
            <person name="Wan K.H."/>
            <person name="Doyle C."/>
            <person name="Baxter E.G."/>
            <person name="Helt G."/>
            <person name="Nelson C.R."/>
            <person name="Miklos G.L.G."/>
            <person name="Abril J.F."/>
            <person name="Agbayani A."/>
            <person name="An H.-J."/>
            <person name="Andrews-Pfannkoch C."/>
            <person name="Baldwin D."/>
            <person name="Ballew R.M."/>
            <person name="Basu A."/>
            <person name="Baxendale J."/>
            <person name="Bayraktaroglu L."/>
            <person name="Beasley E.M."/>
            <person name="Beeson K.Y."/>
            <person name="Benos P.V."/>
            <person name="Berman B.P."/>
            <person name="Bhandari D."/>
            <person name="Bolshakov S."/>
            <person name="Borkova D."/>
            <person name="Botchan M.R."/>
            <person name="Bouck J."/>
            <person name="Brokstein P."/>
            <person name="Brottier P."/>
            <person name="Burtis K.C."/>
            <person name="Busam D.A."/>
            <person name="Butler H."/>
            <person name="Cadieu E."/>
            <person name="Center A."/>
            <person name="Chandra I."/>
            <person name="Cherry J.M."/>
            <person name="Cawley S."/>
            <person name="Dahlke C."/>
            <person name="Davenport L.B."/>
            <person name="Davies P."/>
            <person name="de Pablos B."/>
            <person name="Delcher A."/>
            <person name="Deng Z."/>
            <person name="Mays A.D."/>
            <person name="Dew I."/>
            <person name="Dietz S.M."/>
            <person name="Dodson K."/>
            <person name="Doup L.E."/>
            <person name="Downes M."/>
            <person name="Dugan-Rocha S."/>
            <person name="Dunkov B.C."/>
            <person name="Dunn P."/>
            <person name="Durbin K.J."/>
            <person name="Evangelista C.C."/>
            <person name="Ferraz C."/>
            <person name="Ferriera S."/>
            <person name="Fleischmann W."/>
            <person name="Fosler C."/>
            <person name="Gabrielian A.E."/>
            <person name="Garg N.S."/>
            <person name="Gelbart W.M."/>
            <person name="Glasser K."/>
            <person name="Glodek A."/>
            <person name="Gong F."/>
            <person name="Gorrell J.H."/>
            <person name="Gu Z."/>
            <person name="Guan P."/>
            <person name="Harris M."/>
            <person name="Harris N.L."/>
            <person name="Harvey D.A."/>
            <person name="Heiman T.J."/>
            <person name="Hernandez J.R."/>
            <person name="Houck J."/>
            <person name="Hostin D."/>
            <person name="Houston K.A."/>
            <person name="Howland T.J."/>
            <person name="Wei M.-H."/>
            <person name="Ibegwam C."/>
            <person name="Jalali M."/>
            <person name="Kalush F."/>
            <person name="Karpen G.H."/>
            <person name="Ke Z."/>
            <person name="Kennison J.A."/>
            <person name="Ketchum K.A."/>
            <person name="Kimmel B.E."/>
            <person name="Kodira C.D."/>
            <person name="Kraft C.L."/>
            <person name="Kravitz S."/>
            <person name="Kulp D."/>
            <person name="Lai Z."/>
            <person name="Lasko P."/>
            <person name="Lei Y."/>
            <person name="Levitsky A.A."/>
            <person name="Li J.H."/>
            <person name="Li Z."/>
            <person name="Liang Y."/>
            <person name="Lin X."/>
            <person name="Liu X."/>
            <person name="Mattei B."/>
            <person name="McIntosh T.C."/>
            <person name="McLeod M.P."/>
            <person name="McPherson D."/>
            <person name="Merkulov G."/>
            <person name="Milshina N.V."/>
            <person name="Mobarry C."/>
            <person name="Morris J."/>
            <person name="Moshrefi A."/>
            <person name="Mount S.M."/>
            <person name="Moy M."/>
            <person name="Murphy B."/>
            <person name="Murphy L."/>
            <person name="Muzny D.M."/>
            <person name="Nelson D.L."/>
            <person name="Nelson D.R."/>
            <person name="Nelson K.A."/>
            <person name="Nixon K."/>
            <person name="Nusskern D.R."/>
            <person name="Pacleb J.M."/>
            <person name="Palazzolo M."/>
            <person name="Pittman G.S."/>
            <person name="Pan S."/>
            <person name="Pollard J."/>
            <person name="Puri V."/>
            <person name="Reese M.G."/>
            <person name="Reinert K."/>
            <person name="Remington K."/>
            <person name="Saunders R.D.C."/>
            <person name="Scheeler F."/>
            <person name="Shen H."/>
            <person name="Shue B.C."/>
            <person name="Siden-Kiamos I."/>
            <person name="Simpson M."/>
            <person name="Skupski M.P."/>
            <person name="Smith T.J."/>
            <person name="Spier E."/>
            <person name="Spradling A.C."/>
            <person name="Stapleton M."/>
            <person name="Strong R."/>
            <person name="Sun E."/>
            <person name="Svirskas R."/>
            <person name="Tector C."/>
            <person name="Turner R."/>
            <person name="Venter E."/>
            <person name="Wang A.H."/>
            <person name="Wang X."/>
            <person name="Wang Z.-Y."/>
            <person name="Wassarman D.A."/>
            <person name="Weinstock G.M."/>
            <person name="Weissenbach J."/>
            <person name="Williams S.M."/>
            <person name="Woodage T."/>
            <person name="Worley K.C."/>
            <person name="Wu D."/>
            <person name="Yang S."/>
            <person name="Yao Q.A."/>
            <person name="Ye J."/>
            <person name="Yeh R.-F."/>
            <person name="Zaveri J.S."/>
            <person name="Zhan M."/>
            <person name="Zhang G."/>
            <person name="Zhao Q."/>
            <person name="Zheng L."/>
            <person name="Zheng X.H."/>
            <person name="Zhong F.N."/>
            <person name="Zhong W."/>
            <person name="Zhou X."/>
            <person name="Zhu S.C."/>
            <person name="Zhu X."/>
            <person name="Smith H.O."/>
            <person name="Gibbs R.A."/>
            <person name="Myers E.W."/>
            <person name="Rubin G.M."/>
            <person name="Venter J.C."/>
        </authorList>
    </citation>
    <scope>NUCLEOTIDE SEQUENCE [LARGE SCALE GENOMIC DNA]</scope>
    <source>
        <strain>Berkeley</strain>
    </source>
</reference>
<reference key="2">
    <citation type="journal article" date="2002" name="Genome Biol.">
        <title>Annotation of the Drosophila melanogaster euchromatic genome: a systematic review.</title>
        <authorList>
            <person name="Misra S."/>
            <person name="Crosby M.A."/>
            <person name="Mungall C.J."/>
            <person name="Matthews B.B."/>
            <person name="Campbell K.S."/>
            <person name="Hradecky P."/>
            <person name="Huang Y."/>
            <person name="Kaminker J.S."/>
            <person name="Millburn G.H."/>
            <person name="Prochnik S.E."/>
            <person name="Smith C.D."/>
            <person name="Tupy J.L."/>
            <person name="Whitfield E.J."/>
            <person name="Bayraktaroglu L."/>
            <person name="Berman B.P."/>
            <person name="Bettencourt B.R."/>
            <person name="Celniker S.E."/>
            <person name="de Grey A.D.N.J."/>
            <person name="Drysdale R.A."/>
            <person name="Harris N.L."/>
            <person name="Richter J."/>
            <person name="Russo S."/>
            <person name="Schroeder A.J."/>
            <person name="Shu S.Q."/>
            <person name="Stapleton M."/>
            <person name="Yamada C."/>
            <person name="Ashburner M."/>
            <person name="Gelbart W.M."/>
            <person name="Rubin G.M."/>
            <person name="Lewis S.E."/>
        </authorList>
    </citation>
    <scope>GENOME REANNOTATION</scope>
    <source>
        <strain>Berkeley</strain>
    </source>
</reference>
<reference key="3">
    <citation type="journal article" date="2002" name="Genome Biol.">
        <title>A Drosophila full-length cDNA resource.</title>
        <authorList>
            <person name="Stapleton M."/>
            <person name="Carlson J.W."/>
            <person name="Brokstein P."/>
            <person name="Yu C."/>
            <person name="Champe M."/>
            <person name="George R.A."/>
            <person name="Guarin H."/>
            <person name="Kronmiller B."/>
            <person name="Pacleb J.M."/>
            <person name="Park S."/>
            <person name="Wan K.H."/>
            <person name="Rubin G.M."/>
            <person name="Celniker S.E."/>
        </authorList>
    </citation>
    <scope>NUCLEOTIDE SEQUENCE [LARGE SCALE MRNA]</scope>
    <source>
        <strain>Berkeley</strain>
        <tissue>Head</tissue>
    </source>
</reference>
<reference key="4">
    <citation type="journal article" date="2021" name="IScience">
        <title>Dissecting the concordant and disparate roles of NDUFAF3 and NDUFAF4 in mitochondrial complex I biogenesis.</title>
        <authorList>
            <person name="Murari A."/>
            <person name="Rhooms S.K."/>
            <person name="Garcia C."/>
            <person name="Liu T."/>
            <person name="Li H."/>
            <person name="Mishra B."/>
            <person name="Deshong C."/>
            <person name="Owusu-Ansah E."/>
        </authorList>
    </citation>
    <scope>FUNCTION</scope>
    <scope>INTERACTION WITH COMPLEX 1</scope>
</reference>
<name>TMM70_DROME</name>
<gene>
    <name evidence="6" type="primary">Tmem70</name>
    <name evidence="6" type="ORF">CG7506</name>
</gene>
<evidence type="ECO:0000250" key="1">
    <source>
        <dbReference type="UniProtKB" id="Q9BUB7"/>
    </source>
</evidence>
<evidence type="ECO:0000255" key="2"/>
<evidence type="ECO:0000269" key="3">
    <source>
    </source>
</evidence>
<evidence type="ECO:0000305" key="4"/>
<evidence type="ECO:0000305" key="5">
    <source>
    </source>
</evidence>
<evidence type="ECO:0000312" key="6">
    <source>
        <dbReference type="FlyBase" id="FBgn0035805"/>
    </source>
</evidence>
<evidence type="ECO:0000312" key="7">
    <source>
        <dbReference type="Proteomes" id="UP000000803"/>
    </source>
</evidence>
<dbReference type="EMBL" id="AE014296">
    <property type="protein sequence ID" value="AAF50531.2"/>
    <property type="molecule type" value="Genomic_DNA"/>
</dbReference>
<dbReference type="EMBL" id="AY060605">
    <property type="protein sequence ID" value="AAL28153.1"/>
    <property type="molecule type" value="mRNA"/>
</dbReference>
<dbReference type="RefSeq" id="NP_648144.3">
    <property type="nucleotide sequence ID" value="NM_139887.5"/>
</dbReference>
<dbReference type="FunCoup" id="Q95SS8">
    <property type="interactions" value="1088"/>
</dbReference>
<dbReference type="STRING" id="7227.FBpp0076533"/>
<dbReference type="PaxDb" id="7227-FBpp0076533"/>
<dbReference type="DNASU" id="38857"/>
<dbReference type="EnsemblMetazoa" id="FBtr0076822">
    <property type="protein sequence ID" value="FBpp0076533"/>
    <property type="gene ID" value="FBgn0035805"/>
</dbReference>
<dbReference type="GeneID" id="38857"/>
<dbReference type="KEGG" id="dme:Dmel_CG7506"/>
<dbReference type="UCSC" id="CG7506-RA">
    <property type="organism name" value="d. melanogaster"/>
</dbReference>
<dbReference type="AGR" id="FB:FBgn0035805"/>
<dbReference type="FlyBase" id="FBgn0035805">
    <property type="gene designation" value="Tmem70"/>
</dbReference>
<dbReference type="VEuPathDB" id="VectorBase:FBgn0035805"/>
<dbReference type="eggNOG" id="KOG4478">
    <property type="taxonomic scope" value="Eukaryota"/>
</dbReference>
<dbReference type="GeneTree" id="ENSGT00390000018710"/>
<dbReference type="HOGENOM" id="CLU_096509_0_0_1"/>
<dbReference type="InParanoid" id="Q95SS8"/>
<dbReference type="OMA" id="DFVHLMG"/>
<dbReference type="OrthoDB" id="156886at2759"/>
<dbReference type="PhylomeDB" id="Q95SS8"/>
<dbReference type="BioGRID-ORCS" id="38857">
    <property type="hits" value="1 hit in 1 CRISPR screen"/>
</dbReference>
<dbReference type="GenomeRNAi" id="38857"/>
<dbReference type="PRO" id="PR:Q95SS8"/>
<dbReference type="Proteomes" id="UP000000803">
    <property type="component" value="Chromosome 3L"/>
</dbReference>
<dbReference type="Bgee" id="FBgn0035805">
    <property type="expression patterns" value="Expressed in dorsal cluster neuron (Drosophila) in brain and 123 other cell types or tissues"/>
</dbReference>
<dbReference type="GO" id="GO:0005743">
    <property type="term" value="C:mitochondrial inner membrane"/>
    <property type="evidence" value="ECO:0000305"/>
    <property type="project" value="FlyBase"/>
</dbReference>
<dbReference type="GO" id="GO:0031966">
    <property type="term" value="C:mitochondrial membrane"/>
    <property type="evidence" value="ECO:0000250"/>
    <property type="project" value="UniProtKB"/>
</dbReference>
<dbReference type="GO" id="GO:0005739">
    <property type="term" value="C:mitochondrion"/>
    <property type="evidence" value="ECO:0000314"/>
    <property type="project" value="FlyBase"/>
</dbReference>
<dbReference type="GO" id="GO:0033615">
    <property type="term" value="P:mitochondrial proton-transporting ATP synthase complex assembly"/>
    <property type="evidence" value="ECO:0000250"/>
    <property type="project" value="UniProtKB"/>
</dbReference>
<dbReference type="GO" id="GO:0032981">
    <property type="term" value="P:mitochondrial respiratory chain complex I assembly"/>
    <property type="evidence" value="ECO:0000250"/>
    <property type="project" value="FlyBase"/>
</dbReference>
<dbReference type="InterPro" id="IPR009724">
    <property type="entry name" value="TMEM70"/>
</dbReference>
<dbReference type="InterPro" id="IPR045325">
    <property type="entry name" value="TMEM70/TMEM186/TMEM223"/>
</dbReference>
<dbReference type="PANTHER" id="PTHR13281">
    <property type="entry name" value="TRANSMEMBRANE PROTEIN 70, MITOCHONDRIAL"/>
    <property type="match status" value="1"/>
</dbReference>
<dbReference type="PANTHER" id="PTHR13281:SF0">
    <property type="entry name" value="TRANSMEMBRANE PROTEIN 70, MITOCHONDRIAL"/>
    <property type="match status" value="1"/>
</dbReference>
<dbReference type="Pfam" id="PF06979">
    <property type="entry name" value="TMEM70"/>
    <property type="match status" value="1"/>
</dbReference>
<sequence length="236" mass="26666">MLGLRAMLPKGKHFAVVLGNVSRQITLPHNCRCITSASWTRPQQSQPQNFQQNRWLSVKSTKTESDDALQRIYYGTLAPRMKMVKFFSLSTSLAGLAAQPILLEQGMKIGGTGMAVFLCTVGGFFTFVTPLLLHFITKKYVTELHYNPLTEEYTATTISLLLQKIKTTFRPNDVVVPEVPGMFTSFLVNKRPLFVDPALFDDPEHYVKIMGYDKPIDFKLDLTPNPEKSKTSEEKQ</sequence>